<comment type="function">
    <text evidence="3 4 5">Transcription factor involved in the regulation of tapetum programmed cell death (PCD) and degradation during male reproductive development. Promotes tapetal PCD. Positively regulates the expression of two tapetum-specific genes, the cysteine protease CP1 and the lipid-transfer protein C6 (PubMed:17138695). Acts upstream from and interacts with EAT1/DTD in the regulation of tapetal PCD (PubMed:23385589). Regulates the expression of genes related to aliphatic metabolism during pollen development. May play regulatory role in the lipidic metabolism involved in the formation of pollen wall (PubMed:19825565).</text>
</comment>
<comment type="subunit">
    <text evidence="5 6 7">Homodimer (PubMed:23519457). Interacts with EAT1/DTD (PubMed:23385589, PubMed:23519457). Interacts with TIP2 (PubMed:24894043).</text>
</comment>
<comment type="subcellular location">
    <subcellularLocation>
        <location evidence="1 3 6">Nucleus</location>
    </subcellularLocation>
</comment>
<comment type="disruption phenotype">
    <text evidence="3 4">Male sterility due to failure of tapetum programmed cell death (PCD) and degeneration, and collapse of microspores in developing anthers (PubMed:17138695). Altered pollen wall formation (PubMed:19825565).</text>
</comment>
<comment type="similarity">
    <text>Belongs to the bHLH protein family.</text>
</comment>
<comment type="caution">
    <text evidence="1">Contains a degenerate basic motif not likely to bind DNA.</text>
</comment>
<reference key="1">
    <citation type="journal article" date="2005" name="Nature">
        <title>The map-based sequence of the rice genome.</title>
        <authorList>
            <consortium name="International rice genome sequencing project (IRGSP)"/>
        </authorList>
    </citation>
    <scope>NUCLEOTIDE SEQUENCE [LARGE SCALE GENOMIC DNA]</scope>
    <source>
        <strain>cv. Nipponbare</strain>
    </source>
</reference>
<reference key="2">
    <citation type="journal article" date="2008" name="Nucleic Acids Res.">
        <title>The rice annotation project database (RAP-DB): 2008 update.</title>
        <authorList>
            <consortium name="The rice annotation project (RAP)"/>
        </authorList>
    </citation>
    <scope>GENOME REANNOTATION</scope>
    <source>
        <strain>cv. Nipponbare</strain>
    </source>
</reference>
<reference key="3">
    <citation type="journal article" date="2013" name="Rice">
        <title>Improvement of the Oryza sativa Nipponbare reference genome using next generation sequence and optical map data.</title>
        <authorList>
            <person name="Kawahara Y."/>
            <person name="de la Bastide M."/>
            <person name="Hamilton J.P."/>
            <person name="Kanamori H."/>
            <person name="McCombie W.R."/>
            <person name="Ouyang S."/>
            <person name="Schwartz D.C."/>
            <person name="Tanaka T."/>
            <person name="Wu J."/>
            <person name="Zhou S."/>
            <person name="Childs K.L."/>
            <person name="Davidson R.M."/>
            <person name="Lin H."/>
            <person name="Quesada-Ocampo L."/>
            <person name="Vaillancourt B."/>
            <person name="Sakai H."/>
            <person name="Lee S.S."/>
            <person name="Kim J."/>
            <person name="Numa H."/>
            <person name="Itoh T."/>
            <person name="Buell C.R."/>
            <person name="Matsumoto T."/>
        </authorList>
    </citation>
    <scope>GENOME REANNOTATION</scope>
    <source>
        <strain>cv. Nipponbare</strain>
    </source>
</reference>
<reference key="4">
    <citation type="journal article" date="2005" name="PLoS Biol.">
        <title>The genomes of Oryza sativa: a history of duplications.</title>
        <authorList>
            <person name="Yu J."/>
            <person name="Wang J."/>
            <person name="Lin W."/>
            <person name="Li S."/>
            <person name="Li H."/>
            <person name="Zhou J."/>
            <person name="Ni P."/>
            <person name="Dong W."/>
            <person name="Hu S."/>
            <person name="Zeng C."/>
            <person name="Zhang J."/>
            <person name="Zhang Y."/>
            <person name="Li R."/>
            <person name="Xu Z."/>
            <person name="Li S."/>
            <person name="Li X."/>
            <person name="Zheng H."/>
            <person name="Cong L."/>
            <person name="Lin L."/>
            <person name="Yin J."/>
            <person name="Geng J."/>
            <person name="Li G."/>
            <person name="Shi J."/>
            <person name="Liu J."/>
            <person name="Lv H."/>
            <person name="Li J."/>
            <person name="Wang J."/>
            <person name="Deng Y."/>
            <person name="Ran L."/>
            <person name="Shi X."/>
            <person name="Wang X."/>
            <person name="Wu Q."/>
            <person name="Li C."/>
            <person name="Ren X."/>
            <person name="Wang J."/>
            <person name="Wang X."/>
            <person name="Li D."/>
            <person name="Liu D."/>
            <person name="Zhang X."/>
            <person name="Ji Z."/>
            <person name="Zhao W."/>
            <person name="Sun Y."/>
            <person name="Zhang Z."/>
            <person name="Bao J."/>
            <person name="Han Y."/>
            <person name="Dong L."/>
            <person name="Ji J."/>
            <person name="Chen P."/>
            <person name="Wu S."/>
            <person name="Liu J."/>
            <person name="Xiao Y."/>
            <person name="Bu D."/>
            <person name="Tan J."/>
            <person name="Yang L."/>
            <person name="Ye C."/>
            <person name="Zhang J."/>
            <person name="Xu J."/>
            <person name="Zhou Y."/>
            <person name="Yu Y."/>
            <person name="Zhang B."/>
            <person name="Zhuang S."/>
            <person name="Wei H."/>
            <person name="Liu B."/>
            <person name="Lei M."/>
            <person name="Yu H."/>
            <person name="Li Y."/>
            <person name="Xu H."/>
            <person name="Wei S."/>
            <person name="He X."/>
            <person name="Fang L."/>
            <person name="Zhang Z."/>
            <person name="Zhang Y."/>
            <person name="Huang X."/>
            <person name="Su Z."/>
            <person name="Tong W."/>
            <person name="Li J."/>
            <person name="Tong Z."/>
            <person name="Li S."/>
            <person name="Ye J."/>
            <person name="Wang L."/>
            <person name="Fang L."/>
            <person name="Lei T."/>
            <person name="Chen C.-S."/>
            <person name="Chen H.-C."/>
            <person name="Xu Z."/>
            <person name="Li H."/>
            <person name="Huang H."/>
            <person name="Zhang F."/>
            <person name="Xu H."/>
            <person name="Li N."/>
            <person name="Zhao C."/>
            <person name="Li S."/>
            <person name="Dong L."/>
            <person name="Huang Y."/>
            <person name="Li L."/>
            <person name="Xi Y."/>
            <person name="Qi Q."/>
            <person name="Li W."/>
            <person name="Zhang B."/>
            <person name="Hu W."/>
            <person name="Zhang Y."/>
            <person name="Tian X."/>
            <person name="Jiao Y."/>
            <person name="Liang X."/>
            <person name="Jin J."/>
            <person name="Gao L."/>
            <person name="Zheng W."/>
            <person name="Hao B."/>
            <person name="Liu S.-M."/>
            <person name="Wang W."/>
            <person name="Yuan L."/>
            <person name="Cao M."/>
            <person name="McDermott J."/>
            <person name="Samudrala R."/>
            <person name="Wang J."/>
            <person name="Wong G.K.-S."/>
            <person name="Yang H."/>
        </authorList>
    </citation>
    <scope>NUCLEOTIDE SEQUENCE [LARGE SCALE GENOMIC DNA]</scope>
    <source>
        <strain>cv. Nipponbare</strain>
    </source>
</reference>
<reference key="5">
    <citation type="journal article" date="2006" name="Plant Cell">
        <title>The rice tapetum degeneration retardation gene is required for tapetum degradation and anther development.</title>
        <authorList>
            <person name="Li N."/>
            <person name="Zhang D.S."/>
            <person name="Liu H.S."/>
            <person name="Yin C.S."/>
            <person name="Li X.X."/>
            <person name="Liang W.Q."/>
            <person name="Yuan Z."/>
            <person name="Xu B."/>
            <person name="Chu H.W."/>
            <person name="Wang J."/>
            <person name="Wen T.Q."/>
            <person name="Huang H."/>
            <person name="Luo D."/>
            <person name="Ma H."/>
            <person name="Zhang D.B."/>
        </authorList>
    </citation>
    <scope>FUNCTION</scope>
    <scope>SUBCELLULAR LOCATION</scope>
    <scope>DISRUPTION PHENOTYPE</scope>
</reference>
<reference key="6">
    <citation type="journal article" date="2006" name="Plant Physiol.">
        <title>Genome-wide analysis of basic/helix-loop-helix transcription factor family in rice and Arabidopsis.</title>
        <authorList>
            <person name="Li X."/>
            <person name="Duan X."/>
            <person name="Jiang H."/>
            <person name="Sun Y."/>
            <person name="Tang Y."/>
            <person name="Yuan Z."/>
            <person name="Guo J."/>
            <person name="Liang W."/>
            <person name="Chen L."/>
            <person name="Yin J."/>
            <person name="Ma H."/>
            <person name="Wang J."/>
            <person name="Zhang D."/>
        </authorList>
    </citation>
    <scope>GENE FAMILY</scope>
    <scope>NOMENCLATURE</scope>
</reference>
<reference key="7">
    <citation type="journal article" date="2008" name="Mol. Plant">
        <title>Tapetum degeneration retardation is critical for aliphatic metabolism and gene regulation during rice pollen development.</title>
        <authorList>
            <person name="Zhang D.S."/>
            <person name="Liang W.Q."/>
            <person name="Yuan Z."/>
            <person name="Li N."/>
            <person name="Shi J."/>
            <person name="Wang J."/>
            <person name="Liu Y.M."/>
            <person name="Yu W.J."/>
            <person name="Zhang D.B."/>
        </authorList>
    </citation>
    <scope>FUNCTION</scope>
    <scope>DISRUPTION PHENOTYPE</scope>
</reference>
<reference key="8">
    <citation type="journal article" date="2013" name="Mol. Plant">
        <title>A novel rice bHLH transcription factor, DTD, acts coordinately with TDR in controlling tapetum function and pollen development.</title>
        <authorList>
            <person name="Ji C."/>
            <person name="Li H."/>
            <person name="Chen L."/>
            <person name="Xie M."/>
            <person name="Wang F."/>
            <person name="Chen Y."/>
            <person name="Liu Y.G."/>
        </authorList>
    </citation>
    <scope>SUBUNIT</scope>
    <scope>INTERACTION WITH EAT1/DTD</scope>
    <scope>SUBCELLULAR LOCATION</scope>
</reference>
<reference key="9">
    <citation type="journal article" date="2013" name="Nat. Commun.">
        <title>EAT1 promotes tapetal cell death by regulating aspartic proteases during male reproductive development in rice.</title>
        <authorList>
            <person name="Niu N."/>
            <person name="Liang W."/>
            <person name="Yang X."/>
            <person name="Jin W."/>
            <person name="Wilson Z.A."/>
            <person name="Hu J."/>
            <person name="Zhang D."/>
        </authorList>
    </citation>
    <scope>FUNCTION</scope>
    <scope>INTERACTION WITH EAT1/DTD</scope>
    <scope>SUBCELLULAR LOCATION</scope>
</reference>
<reference key="10">
    <citation type="journal article" date="2014" name="Plant Cell">
        <title>The bHLH142 transcription factor coordinates with TDR1 to modulate the expression of EAT1 and regulate pollen development in rice.</title>
        <authorList>
            <person name="Ko S.S."/>
            <person name="Li M.J."/>
            <person name="Sun-Ben Ku M."/>
            <person name="Ho Y.C."/>
            <person name="Lin Y.J."/>
            <person name="Chuang M.H."/>
            <person name="Hsing H.X."/>
            <person name="Lien Y.C."/>
            <person name="Yang H.T."/>
            <person name="Chang H.C."/>
            <person name="Chan M.T."/>
        </authorList>
    </citation>
    <scope>INTERACTION WITH TIP2</scope>
</reference>
<organism>
    <name type="scientific">Oryza sativa subsp. japonica</name>
    <name type="common">Rice</name>
    <dbReference type="NCBI Taxonomy" id="39947"/>
    <lineage>
        <taxon>Eukaryota</taxon>
        <taxon>Viridiplantae</taxon>
        <taxon>Streptophyta</taxon>
        <taxon>Embryophyta</taxon>
        <taxon>Tracheophyta</taxon>
        <taxon>Spermatophyta</taxon>
        <taxon>Magnoliopsida</taxon>
        <taxon>Liliopsida</taxon>
        <taxon>Poales</taxon>
        <taxon>Poaceae</taxon>
        <taxon>BOP clade</taxon>
        <taxon>Oryzoideae</taxon>
        <taxon>Oryzeae</taxon>
        <taxon>Oryzinae</taxon>
        <taxon>Oryza</taxon>
        <taxon>Oryza sativa</taxon>
    </lineage>
</organism>
<proteinExistence type="evidence at protein level"/>
<evidence type="ECO:0000255" key="1">
    <source>
        <dbReference type="PROSITE-ProRule" id="PRU00981"/>
    </source>
</evidence>
<evidence type="ECO:0000256" key="2">
    <source>
        <dbReference type="SAM" id="MobiDB-lite"/>
    </source>
</evidence>
<evidence type="ECO:0000269" key="3">
    <source>
    </source>
</evidence>
<evidence type="ECO:0000269" key="4">
    <source>
    </source>
</evidence>
<evidence type="ECO:0000269" key="5">
    <source>
    </source>
</evidence>
<evidence type="ECO:0000269" key="6">
    <source>
    </source>
</evidence>
<evidence type="ECO:0000269" key="7">
    <source>
    </source>
</evidence>
<evidence type="ECO:0000303" key="8">
    <source>
    </source>
</evidence>
<evidence type="ECO:0000303" key="9">
    <source>
    </source>
</evidence>
<evidence type="ECO:0000305" key="10"/>
<evidence type="ECO:0000312" key="11">
    <source>
        <dbReference type="EMBL" id="BAD07594.1"/>
    </source>
</evidence>
<evidence type="ECO:0000312" key="12">
    <source>
        <dbReference type="EMBL" id="BAD08134.1"/>
    </source>
</evidence>
<evidence type="ECO:0000312" key="13">
    <source>
        <dbReference type="EMBL" id="BAF07624.1"/>
    </source>
</evidence>
<evidence type="ECO:0000312" key="14">
    <source>
        <dbReference type="EMBL" id="EEE56199.1"/>
    </source>
</evidence>
<feature type="chain" id="PRO_0000436457" description="Transcription factor TDR">
    <location>
        <begin position="1"/>
        <end position="552"/>
    </location>
</feature>
<feature type="domain" description="bHLH" evidence="1">
    <location>
        <begin position="281"/>
        <end position="330"/>
    </location>
</feature>
<feature type="region of interest" description="Disordered" evidence="2">
    <location>
        <begin position="241"/>
        <end position="289"/>
    </location>
</feature>
<feature type="region of interest" description="Basic motif; degenerate" evidence="1">
    <location>
        <begin position="281"/>
        <end position="294"/>
    </location>
</feature>
<feature type="region of interest" description="Helix-loop-helix motif" evidence="1">
    <location>
        <begin position="295"/>
        <end position="330"/>
    </location>
</feature>
<feature type="region of interest" description="Disordered" evidence="2">
    <location>
        <begin position="347"/>
        <end position="414"/>
    </location>
</feature>
<feature type="compositionally biased region" description="Basic and acidic residues" evidence="2">
    <location>
        <begin position="256"/>
        <end position="265"/>
    </location>
</feature>
<feature type="compositionally biased region" description="Polar residues" evidence="2">
    <location>
        <begin position="373"/>
        <end position="391"/>
    </location>
</feature>
<feature type="compositionally biased region" description="Basic and acidic residues" evidence="2">
    <location>
        <begin position="393"/>
        <end position="404"/>
    </location>
</feature>
<gene>
    <name evidence="9" type="primary">TDR</name>
    <name evidence="10" type="synonym">BHLH5</name>
    <name evidence="13" type="ordered locus">Os02g0120500</name>
    <name evidence="10" type="ordered locus">LOC_Os02g02820</name>
    <name evidence="11" type="ORF">OJ1020_C02.6</name>
    <name evidence="14" type="ORF">OsJ_05158</name>
    <name evidence="12" type="ORF">OSJNBb0088N06.15</name>
</gene>
<dbReference type="EMBL" id="AP004078">
    <property type="protein sequence ID" value="BAD07594.1"/>
    <property type="molecule type" value="Genomic_DNA"/>
</dbReference>
<dbReference type="EMBL" id="AP005851">
    <property type="protein sequence ID" value="BAD08134.1"/>
    <property type="molecule type" value="Genomic_DNA"/>
</dbReference>
<dbReference type="EMBL" id="AP008208">
    <property type="protein sequence ID" value="BAF07624.1"/>
    <property type="molecule type" value="Genomic_DNA"/>
</dbReference>
<dbReference type="EMBL" id="AP014958">
    <property type="protein sequence ID" value="BAS76702.1"/>
    <property type="molecule type" value="Genomic_DNA"/>
</dbReference>
<dbReference type="EMBL" id="CM000139">
    <property type="protein sequence ID" value="EEE56199.1"/>
    <property type="molecule type" value="Genomic_DNA"/>
</dbReference>
<dbReference type="RefSeq" id="NP_001388684.1">
    <property type="nucleotide sequence ID" value="NM_001401755.1"/>
</dbReference>
<dbReference type="RefSeq" id="XP_015625730.1">
    <property type="nucleotide sequence ID" value="XM_015770244.1"/>
</dbReference>
<dbReference type="RefSeq" id="XP_066163074.1">
    <property type="nucleotide sequence ID" value="XM_066306977.1"/>
</dbReference>
<dbReference type="SMR" id="Q6YUS3"/>
<dbReference type="FunCoup" id="Q6YUS3">
    <property type="interactions" value="855"/>
</dbReference>
<dbReference type="STRING" id="39947.Q6YUS3"/>
<dbReference type="PaxDb" id="39947-Q6YUS3"/>
<dbReference type="EnsemblPlants" id="Os02t0120500-01">
    <property type="protein sequence ID" value="Os02t0120500-01"/>
    <property type="gene ID" value="Os02g0120500"/>
</dbReference>
<dbReference type="EnsemblPlants" id="Os02t0120500-02">
    <property type="protein sequence ID" value="Os02t0120500-02"/>
    <property type="gene ID" value="Os02g0120500"/>
</dbReference>
<dbReference type="GeneID" id="4328113"/>
<dbReference type="Gramene" id="Os02t0120500-01">
    <property type="protein sequence ID" value="Os02t0120500-01"/>
    <property type="gene ID" value="Os02g0120500"/>
</dbReference>
<dbReference type="Gramene" id="Os02t0120500-02">
    <property type="protein sequence ID" value="Os02t0120500-02"/>
    <property type="gene ID" value="Os02g0120500"/>
</dbReference>
<dbReference type="KEGG" id="dosa:Os02g0120500"/>
<dbReference type="eggNOG" id="ENOG502QQUB">
    <property type="taxonomic scope" value="Eukaryota"/>
</dbReference>
<dbReference type="HOGENOM" id="CLU_037477_0_0_1"/>
<dbReference type="InParanoid" id="Q6YUS3"/>
<dbReference type="OMA" id="HPRTKAC"/>
<dbReference type="OrthoDB" id="1890947at2759"/>
<dbReference type="PlantReactome" id="R-OSA-8986768">
    <property type="pathway name" value="Anther and pollen development"/>
</dbReference>
<dbReference type="Proteomes" id="UP000000763">
    <property type="component" value="Chromosome 2"/>
</dbReference>
<dbReference type="Proteomes" id="UP000007752">
    <property type="component" value="Chromosome 2"/>
</dbReference>
<dbReference type="Proteomes" id="UP000059680">
    <property type="component" value="Chromosome 2"/>
</dbReference>
<dbReference type="GO" id="GO:0005634">
    <property type="term" value="C:nucleus"/>
    <property type="evidence" value="ECO:0000314"/>
    <property type="project" value="UniProtKB"/>
</dbReference>
<dbReference type="GO" id="GO:0003677">
    <property type="term" value="F:DNA binding"/>
    <property type="evidence" value="ECO:0000315"/>
    <property type="project" value="Gramene"/>
</dbReference>
<dbReference type="GO" id="GO:0003700">
    <property type="term" value="F:DNA-binding transcription factor activity"/>
    <property type="evidence" value="ECO:0000318"/>
    <property type="project" value="GO_Central"/>
</dbReference>
<dbReference type="GO" id="GO:0046983">
    <property type="term" value="F:protein dimerization activity"/>
    <property type="evidence" value="ECO:0007669"/>
    <property type="project" value="InterPro"/>
</dbReference>
<dbReference type="GO" id="GO:0043565">
    <property type="term" value="F:sequence-specific DNA binding"/>
    <property type="evidence" value="ECO:0000318"/>
    <property type="project" value="GO_Central"/>
</dbReference>
<dbReference type="GO" id="GO:0048653">
    <property type="term" value="P:anther development"/>
    <property type="evidence" value="ECO:0000315"/>
    <property type="project" value="Gramene"/>
</dbReference>
<dbReference type="GO" id="GO:0048654">
    <property type="term" value="P:anther morphogenesis"/>
    <property type="evidence" value="ECO:0000315"/>
    <property type="project" value="Gramene"/>
</dbReference>
<dbReference type="GO" id="GO:0048657">
    <property type="term" value="P:anther wall tapetum cell differentiation"/>
    <property type="evidence" value="ECO:0000315"/>
    <property type="project" value="Gramene"/>
</dbReference>
<dbReference type="GO" id="GO:0006355">
    <property type="term" value="P:regulation of DNA-templated transcription"/>
    <property type="evidence" value="ECO:0000318"/>
    <property type="project" value="GO_Central"/>
</dbReference>
<dbReference type="CDD" id="cd11443">
    <property type="entry name" value="bHLH_AtAMS_like"/>
    <property type="match status" value="1"/>
</dbReference>
<dbReference type="Gene3D" id="4.10.280.10">
    <property type="entry name" value="Helix-loop-helix DNA-binding domain"/>
    <property type="match status" value="1"/>
</dbReference>
<dbReference type="InterPro" id="IPR054502">
    <property type="entry name" value="bHLH-TF_ACT-like_plant"/>
</dbReference>
<dbReference type="InterPro" id="IPR011598">
    <property type="entry name" value="bHLH_dom"/>
</dbReference>
<dbReference type="InterPro" id="IPR036638">
    <property type="entry name" value="HLH_DNA-bd_sf"/>
</dbReference>
<dbReference type="InterPro" id="IPR051358">
    <property type="entry name" value="TF_AMS/ICE1/BHLH6-like"/>
</dbReference>
<dbReference type="PANTHER" id="PTHR31945:SF11">
    <property type="entry name" value="TRANSCRIPTION FACTOR ABORTED MICROSPORES"/>
    <property type="match status" value="1"/>
</dbReference>
<dbReference type="PANTHER" id="PTHR31945">
    <property type="entry name" value="TRANSCRIPTION FACTOR SCREAM2-RELATED"/>
    <property type="match status" value="1"/>
</dbReference>
<dbReference type="Pfam" id="PF22754">
    <property type="entry name" value="bHLH-TF_ACT-like_plant"/>
    <property type="match status" value="1"/>
</dbReference>
<dbReference type="Pfam" id="PF00010">
    <property type="entry name" value="HLH"/>
    <property type="match status" value="1"/>
</dbReference>
<dbReference type="SMART" id="SM00353">
    <property type="entry name" value="HLH"/>
    <property type="match status" value="1"/>
</dbReference>
<dbReference type="SUPFAM" id="SSF47459">
    <property type="entry name" value="HLH, helix-loop-helix DNA-binding domain"/>
    <property type="match status" value="1"/>
</dbReference>
<dbReference type="PROSITE" id="PS50888">
    <property type="entry name" value="BHLH"/>
    <property type="match status" value="1"/>
</dbReference>
<name>TDR_ORYSJ</name>
<accession>Q6YUS3</accession>
<keyword id="KW-0217">Developmental protein</keyword>
<keyword id="KW-0539">Nucleus</keyword>
<keyword id="KW-1185">Reference proteome</keyword>
<keyword id="KW-0804">Transcription</keyword>
<keyword id="KW-0805">Transcription regulation</keyword>
<sequence>MGRGDHLLMKNSNAAAAAAAVNGGGTSLDAALRPLVGSDGWDYCIYWRLSPDQRFLEMTGFCCSSELEAQVSALLDLPSSIPLDSSSIGMHAQALLSNQPIWQSSSEEEEADGGGGAKTRLLVPVAGGLVELFASRYMAEEQQMAELVMAQCGGGGAGDDGGGQAWPPPETPSFQWDGGADAQRLMYGGSSLNLFDAAAADDDPFLGGGGGDAVGDEAAAAGAWPYAGMAVSEPSVAVAQEQMQHAAGGGVAESGSEGRKLHGGDPEDDGDGEGRSGGAKRQQCKNLEAERKRRKKLNGHLYKLRSLVPNITKMDRASILGDAIDYIVGLQKQVKELQDELEDNHVHHKPPDVLIDHPPPASLVGLDNDDASPPNSHQQQPPLAVSGSSSRRSNKDPAMTDDKVGGGGGGGHRMEPQLEVRQVQGNELFVQVLWEHKPGGFVRLMDAMNALGLEVINVNVTTYKTLVLNVFRVMVRDSEVAVQADRVRDSLLEVTRETYPGVWPSPQEEDDAKFDGGDGGQAAAAAAAAGGEHYHDEVGGGYHQHLHYLAFD</sequence>
<protein>
    <recommendedName>
        <fullName evidence="10">Transcription factor TDR</fullName>
    </recommendedName>
    <alternativeName>
        <fullName evidence="10">Basic helix-loop-helix protein 5</fullName>
        <shortName evidence="8">OsbHLH005</shortName>
    </alternativeName>
    <alternativeName>
        <fullName evidence="9">Protein TAPETUM DEGENERATION RETARDATION</fullName>
    </alternativeName>
</protein>